<dbReference type="EC" id="2.3.1.184" evidence="2"/>
<dbReference type="EMBL" id="EU334497">
    <property type="protein sequence ID" value="ABY50954.1"/>
    <property type="molecule type" value="Genomic_DNA"/>
</dbReference>
<dbReference type="SMR" id="B0FLN1"/>
<dbReference type="STRING" id="400667.A1S_0109"/>
<dbReference type="eggNOG" id="COG3916">
    <property type="taxonomic scope" value="Bacteria"/>
</dbReference>
<dbReference type="BRENDA" id="2.3.1.184">
    <property type="organism ID" value="98"/>
</dbReference>
<dbReference type="PHI-base" id="PHI:11262"/>
<dbReference type="PHI-base" id="PHI:11686"/>
<dbReference type="PHI-base" id="PHI:8774"/>
<dbReference type="GO" id="GO:0061579">
    <property type="term" value="F:N-acyl homoserine lactone synthase activity"/>
    <property type="evidence" value="ECO:0007669"/>
    <property type="project" value="UniProtKB-EC"/>
</dbReference>
<dbReference type="GO" id="GO:0009372">
    <property type="term" value="P:quorum sensing"/>
    <property type="evidence" value="ECO:0007669"/>
    <property type="project" value="UniProtKB-KW"/>
</dbReference>
<dbReference type="GO" id="GO:0007165">
    <property type="term" value="P:signal transduction"/>
    <property type="evidence" value="ECO:0007669"/>
    <property type="project" value="TreeGrafter"/>
</dbReference>
<dbReference type="Gene3D" id="3.40.630.30">
    <property type="match status" value="1"/>
</dbReference>
<dbReference type="InterPro" id="IPR016181">
    <property type="entry name" value="Acyl_CoA_acyltransferase"/>
</dbReference>
<dbReference type="InterPro" id="IPR001690">
    <property type="entry name" value="Autoind_synthase"/>
</dbReference>
<dbReference type="PANTHER" id="PTHR39322">
    <property type="entry name" value="ACYL-HOMOSERINE-LACTONE SYNTHASE"/>
    <property type="match status" value="1"/>
</dbReference>
<dbReference type="PANTHER" id="PTHR39322:SF1">
    <property type="entry name" value="ISOVALERYL-HOMOSERINE LACTONE SYNTHASE"/>
    <property type="match status" value="1"/>
</dbReference>
<dbReference type="Pfam" id="PF00765">
    <property type="entry name" value="Autoind_synth"/>
    <property type="match status" value="1"/>
</dbReference>
<dbReference type="PRINTS" id="PR01549">
    <property type="entry name" value="AUTOINDCRSYN"/>
</dbReference>
<dbReference type="SUPFAM" id="SSF55729">
    <property type="entry name" value="Acyl-CoA N-acyltransferases (Nat)"/>
    <property type="match status" value="1"/>
</dbReference>
<dbReference type="PROSITE" id="PS51187">
    <property type="entry name" value="AUTOINDUCER_SYNTH_2"/>
    <property type="match status" value="1"/>
</dbReference>
<gene>
    <name evidence="3" type="primary">abaI</name>
</gene>
<comment type="function">
    <text evidence="2">Involved in the synthesis of the acyl-homoserine lactone (AHL) signal N-(3-hydroxydodecanoyl)-L-HSL (3-hydroxy-C(12)-HSL or OH-dDHL). Required for normal biofilm development.</text>
</comment>
<comment type="catalytic activity">
    <reaction evidence="2">
        <text>a fatty acyl-[ACP] + S-adenosyl-L-methionine = an N-acyl-L-homoserine lactone + S-methyl-5'-thioadenosine + holo-[ACP] + H(+)</text>
        <dbReference type="Rhea" id="RHEA:10096"/>
        <dbReference type="Rhea" id="RHEA-COMP:9685"/>
        <dbReference type="Rhea" id="RHEA-COMP:14125"/>
        <dbReference type="ChEBI" id="CHEBI:15378"/>
        <dbReference type="ChEBI" id="CHEBI:17509"/>
        <dbReference type="ChEBI" id="CHEBI:55474"/>
        <dbReference type="ChEBI" id="CHEBI:59789"/>
        <dbReference type="ChEBI" id="CHEBI:64479"/>
        <dbReference type="ChEBI" id="CHEBI:138651"/>
        <dbReference type="EC" id="2.3.1.184"/>
    </reaction>
</comment>
<comment type="induction">
    <text evidence="2">Expression is activated by AHL signals in a positive-feedback loop.</text>
</comment>
<comment type="disruption phenotype">
    <text evidence="2">Mutant fails to produce any detectable AHL signals and is impaired in biofilm development.</text>
</comment>
<comment type="similarity">
    <text evidence="1">Belongs to the autoinducer synthase family.</text>
</comment>
<accession>B0FLN1</accession>
<protein>
    <recommendedName>
        <fullName evidence="4">Acyl-homoserine-lactone synthase</fullName>
        <ecNumber evidence="2">2.3.1.184</ecNumber>
    </recommendedName>
    <alternativeName>
        <fullName evidence="4">Autoinducer synthesis protein AbaI</fullName>
    </alternativeName>
</protein>
<proteinExistence type="evidence at protein level"/>
<evidence type="ECO:0000255" key="1">
    <source>
        <dbReference type="PROSITE-ProRule" id="PRU00533"/>
    </source>
</evidence>
<evidence type="ECO:0000269" key="2">
    <source>
    </source>
</evidence>
<evidence type="ECO:0000303" key="3">
    <source>
    </source>
</evidence>
<evidence type="ECO:0000305" key="4"/>
<sequence>MNIIAGFQNNFSEGLYTKFKSYRYRVFVEYLGWELNCPNNEETRIQFDKVDTAYVVAQDRESNIIGCARLLPTTQPYLLGEIFPQLLNGMPIPCSPEIWELSRFSAVDFSKPPSSSSQAVSSPISIAILQEAINFAREQGAKQLITTSPLGVERLLRAAGFRAHRAGPPMMIDGYSMFACLIDV</sequence>
<keyword id="KW-0071">Autoinducer synthesis</keyword>
<keyword id="KW-0673">Quorum sensing</keyword>
<keyword id="KW-0949">S-adenosyl-L-methionine</keyword>
<keyword id="KW-0808">Transferase</keyword>
<name>ABAI_ACIBA</name>
<organism>
    <name type="scientific">Acinetobacter baumannii</name>
    <dbReference type="NCBI Taxonomy" id="470"/>
    <lineage>
        <taxon>Bacteria</taxon>
        <taxon>Pseudomonadati</taxon>
        <taxon>Pseudomonadota</taxon>
        <taxon>Gammaproteobacteria</taxon>
        <taxon>Moraxellales</taxon>
        <taxon>Moraxellaceae</taxon>
        <taxon>Acinetobacter</taxon>
        <taxon>Acinetobacter calcoaceticus/baumannii complex</taxon>
    </lineage>
</organism>
<reference key="1">
    <citation type="journal article" date="2008" name="J. Bacteriol.">
        <title>Isolation and characterization of an autoinducer synthase from Acinetobacter baumannii.</title>
        <authorList>
            <person name="Niu C."/>
            <person name="Clemmer K.M."/>
            <person name="Bonomo R.A."/>
            <person name="Rather P.N."/>
        </authorList>
    </citation>
    <scope>NUCLEOTIDE SEQUENCE [GENOMIC DNA]</scope>
    <scope>FUNCTION</scope>
    <scope>CATALYTIC ACTIVITY</scope>
    <scope>INDUCTION</scope>
    <scope>DISRUPTION PHENOTYPE</scope>
    <source>
        <strain>M2</strain>
    </source>
</reference>
<feature type="chain" id="PRO_0000438126" description="Acyl-homoserine-lactone synthase">
    <location>
        <begin position="1"/>
        <end position="184"/>
    </location>
</feature>